<feature type="chain" id="PRO_0000352347" description="Malonate-semialdehyde dehydrogenase">
    <location>
        <begin position="1"/>
        <end position="488"/>
    </location>
</feature>
<feature type="active site" description="Nucleophile" evidence="1">
    <location>
        <position position="284"/>
    </location>
</feature>
<feature type="binding site" evidence="1">
    <location>
        <position position="150"/>
    </location>
    <ligand>
        <name>NAD(+)</name>
        <dbReference type="ChEBI" id="CHEBI:57540"/>
    </ligand>
</feature>
<feature type="binding site" evidence="1">
    <location>
        <position position="152"/>
    </location>
    <ligand>
        <name>NAD(+)</name>
        <dbReference type="ChEBI" id="CHEBI:57540"/>
    </ligand>
</feature>
<feature type="binding site" evidence="1">
    <location>
        <position position="176"/>
    </location>
    <ligand>
        <name>NAD(+)</name>
        <dbReference type="ChEBI" id="CHEBI:57540"/>
    </ligand>
</feature>
<feature type="binding site" evidence="1">
    <location>
        <position position="179"/>
    </location>
    <ligand>
        <name>NAD(+)</name>
        <dbReference type="ChEBI" id="CHEBI:57540"/>
    </ligand>
</feature>
<feature type="binding site" evidence="1">
    <location>
        <position position="180"/>
    </location>
    <ligand>
        <name>NAD(+)</name>
        <dbReference type="ChEBI" id="CHEBI:57540"/>
    </ligand>
</feature>
<feature type="binding site" evidence="1">
    <location>
        <position position="229"/>
    </location>
    <ligand>
        <name>NAD(+)</name>
        <dbReference type="ChEBI" id="CHEBI:57540"/>
    </ligand>
</feature>
<feature type="binding site" evidence="1">
    <location>
        <position position="251"/>
    </location>
    <ligand>
        <name>NAD(+)</name>
        <dbReference type="ChEBI" id="CHEBI:57540"/>
    </ligand>
</feature>
<feature type="binding site" evidence="1">
    <location>
        <position position="382"/>
    </location>
    <ligand>
        <name>NAD(+)</name>
        <dbReference type="ChEBI" id="CHEBI:57540"/>
    </ligand>
</feature>
<protein>
    <recommendedName>
        <fullName evidence="1">Malonate-semialdehyde dehydrogenase</fullName>
        <shortName evidence="1">MSA dehydrogenase</shortName>
        <ecNumber evidence="1">1.2.1.27</ecNumber>
    </recommendedName>
    <alternativeName>
        <fullName evidence="1">Methylmalonate-semialdehyde dehydrogenase</fullName>
        <shortName evidence="1">MMSA dehydrogenase</shortName>
        <shortName evidence="1">MSDH</shortName>
    </alternativeName>
</protein>
<evidence type="ECO:0000255" key="1">
    <source>
        <dbReference type="HAMAP-Rule" id="MF_01670"/>
    </source>
</evidence>
<name>IOLA_LISMF</name>
<proteinExistence type="inferred from homology"/>
<sequence>MADVRKLKNYINGEWVESRADKYEDVINPATGEVLCQVPISTRAELDQAAVIAEQAFEKWSQVAVPRRARVLFSFQQLLIQHKEKLARLITLENGKNLSEARGEVQRGIENVEFAAGAPTLMMGDSLASIATDVEAANYRYPVGVVGGIAPFNFPMMVPCWMFPMAIALGNSFILKPSERTPLLMEKLVELFSEAGLPKGVFNVVYGAHDVVNGILENEIIKAVSFVGSKPVGEYVYKTGSANLKRVQALTGAKNHTIVLNDADLEDTVTNVISAAFGSAGERCMACAVVTVEEGIADEFLAALRTAAQNVKIGNGLDDGVFLGPVIREENQKRTIAYIEKGLEEGAKLTVDGRETGLSEGHFVGPTILEDVTTDMTIWKDEIFAPVLSVIRVKNLQEAVRVANQSEFANGACIFTNNAKAIRYFREKIDAGMLGVNLGVPAPMAFFPFSGWKSSFYGTLHANGKDSVDFYTHKKVVTARYSLKGYEE</sequence>
<dbReference type="EC" id="1.2.1.27" evidence="1"/>
<dbReference type="EMBL" id="AE017262">
    <property type="protein sequence ID" value="AAT03180.1"/>
    <property type="molecule type" value="Genomic_DNA"/>
</dbReference>
<dbReference type="RefSeq" id="WP_003734600.1">
    <property type="nucleotide sequence ID" value="NC_002973.6"/>
</dbReference>
<dbReference type="SMR" id="Q723T1"/>
<dbReference type="KEGG" id="lmf:LMOf2365_0395"/>
<dbReference type="HOGENOM" id="CLU_005391_1_10_9"/>
<dbReference type="UniPathway" id="UPA00076">
    <property type="reaction ID" value="UER00148"/>
</dbReference>
<dbReference type="GO" id="GO:0018478">
    <property type="term" value="F:malonate-semialdehyde dehydrogenase (acetylating) activity"/>
    <property type="evidence" value="ECO:0007669"/>
    <property type="project" value="UniProtKB-UniRule"/>
</dbReference>
<dbReference type="GO" id="GO:0004491">
    <property type="term" value="F:methylmalonate-semialdehyde dehydrogenase (acylating, NAD) activity"/>
    <property type="evidence" value="ECO:0007669"/>
    <property type="project" value="UniProtKB-UniRule"/>
</dbReference>
<dbReference type="GO" id="GO:0019310">
    <property type="term" value="P:inositol catabolic process"/>
    <property type="evidence" value="ECO:0007669"/>
    <property type="project" value="UniProtKB-UniRule"/>
</dbReference>
<dbReference type="GO" id="GO:0006210">
    <property type="term" value="P:thymine catabolic process"/>
    <property type="evidence" value="ECO:0007669"/>
    <property type="project" value="TreeGrafter"/>
</dbReference>
<dbReference type="GO" id="GO:0006574">
    <property type="term" value="P:valine catabolic process"/>
    <property type="evidence" value="ECO:0007669"/>
    <property type="project" value="TreeGrafter"/>
</dbReference>
<dbReference type="CDD" id="cd07085">
    <property type="entry name" value="ALDH_F6_MMSDH"/>
    <property type="match status" value="1"/>
</dbReference>
<dbReference type="FunFam" id="3.40.309.10:FF:000002">
    <property type="entry name" value="Methylmalonate-semialdehyde dehydrogenase (Acylating)"/>
    <property type="match status" value="1"/>
</dbReference>
<dbReference type="FunFam" id="3.40.605.10:FF:000003">
    <property type="entry name" value="Methylmalonate-semialdehyde dehydrogenase [acylating]"/>
    <property type="match status" value="1"/>
</dbReference>
<dbReference type="Gene3D" id="3.40.605.10">
    <property type="entry name" value="Aldehyde Dehydrogenase, Chain A, domain 1"/>
    <property type="match status" value="1"/>
</dbReference>
<dbReference type="Gene3D" id="3.40.309.10">
    <property type="entry name" value="Aldehyde Dehydrogenase, Chain A, domain 2"/>
    <property type="match status" value="1"/>
</dbReference>
<dbReference type="HAMAP" id="MF_01670">
    <property type="entry name" value="IolA"/>
    <property type="match status" value="1"/>
</dbReference>
<dbReference type="InterPro" id="IPR016161">
    <property type="entry name" value="Ald_DH/histidinol_DH"/>
</dbReference>
<dbReference type="InterPro" id="IPR016163">
    <property type="entry name" value="Ald_DH_C"/>
</dbReference>
<dbReference type="InterPro" id="IPR016160">
    <property type="entry name" value="Ald_DH_CS_CYS"/>
</dbReference>
<dbReference type="InterPro" id="IPR016162">
    <property type="entry name" value="Ald_DH_N"/>
</dbReference>
<dbReference type="InterPro" id="IPR015590">
    <property type="entry name" value="Aldehyde_DH_dom"/>
</dbReference>
<dbReference type="InterPro" id="IPR010061">
    <property type="entry name" value="MeMal-semiAld_DH"/>
</dbReference>
<dbReference type="InterPro" id="IPR023510">
    <property type="entry name" value="MSDH_GmP_bac"/>
</dbReference>
<dbReference type="NCBIfam" id="TIGR01722">
    <property type="entry name" value="MMSDH"/>
    <property type="match status" value="1"/>
</dbReference>
<dbReference type="PANTHER" id="PTHR43866">
    <property type="entry name" value="MALONATE-SEMIALDEHYDE DEHYDROGENASE"/>
    <property type="match status" value="1"/>
</dbReference>
<dbReference type="PANTHER" id="PTHR43866:SF4">
    <property type="entry name" value="MALONATE-SEMIALDEHYDE DEHYDROGENASE"/>
    <property type="match status" value="1"/>
</dbReference>
<dbReference type="Pfam" id="PF00171">
    <property type="entry name" value="Aldedh"/>
    <property type="match status" value="1"/>
</dbReference>
<dbReference type="SUPFAM" id="SSF53720">
    <property type="entry name" value="ALDH-like"/>
    <property type="match status" value="1"/>
</dbReference>
<dbReference type="PROSITE" id="PS00070">
    <property type="entry name" value="ALDEHYDE_DEHYDR_CYS"/>
    <property type="match status" value="1"/>
</dbReference>
<reference key="1">
    <citation type="journal article" date="2004" name="Nucleic Acids Res.">
        <title>Whole genome comparisons of serotype 4b and 1/2a strains of the food-borne pathogen Listeria monocytogenes reveal new insights into the core genome components of this species.</title>
        <authorList>
            <person name="Nelson K.E."/>
            <person name="Fouts D.E."/>
            <person name="Mongodin E.F."/>
            <person name="Ravel J."/>
            <person name="DeBoy R.T."/>
            <person name="Kolonay J.F."/>
            <person name="Rasko D.A."/>
            <person name="Angiuoli S.V."/>
            <person name="Gill S.R."/>
            <person name="Paulsen I.T."/>
            <person name="Peterson J.D."/>
            <person name="White O."/>
            <person name="Nelson W.C."/>
            <person name="Nierman W.C."/>
            <person name="Beanan M.J."/>
            <person name="Brinkac L.M."/>
            <person name="Daugherty S.C."/>
            <person name="Dodson R.J."/>
            <person name="Durkin A.S."/>
            <person name="Madupu R."/>
            <person name="Haft D.H."/>
            <person name="Selengut J."/>
            <person name="Van Aken S.E."/>
            <person name="Khouri H.M."/>
            <person name="Fedorova N."/>
            <person name="Forberger H.A."/>
            <person name="Tran B."/>
            <person name="Kathariou S."/>
            <person name="Wonderling L.D."/>
            <person name="Uhlich G.A."/>
            <person name="Bayles D.O."/>
            <person name="Luchansky J.B."/>
            <person name="Fraser C.M."/>
        </authorList>
    </citation>
    <scope>NUCLEOTIDE SEQUENCE [LARGE SCALE GENOMIC DNA]</scope>
    <source>
        <strain>F2365</strain>
    </source>
</reference>
<organism>
    <name type="scientific">Listeria monocytogenes serotype 4b (strain F2365)</name>
    <dbReference type="NCBI Taxonomy" id="265669"/>
    <lineage>
        <taxon>Bacteria</taxon>
        <taxon>Bacillati</taxon>
        <taxon>Bacillota</taxon>
        <taxon>Bacilli</taxon>
        <taxon>Bacillales</taxon>
        <taxon>Listeriaceae</taxon>
        <taxon>Listeria</taxon>
    </lineage>
</organism>
<keyword id="KW-0520">NAD</keyword>
<keyword id="KW-0560">Oxidoreductase</keyword>
<accession>Q723T1</accession>
<gene>
    <name evidence="1" type="primary">iolA</name>
    <name type="ordered locus">LMOf2365_0395</name>
</gene>
<comment type="function">
    <text evidence="1">Catalyzes the oxidation of malonate semialdehyde (MSA) and methylmalonate semialdehyde (MMSA) into acetyl-CoA and propanoyl-CoA, respectively. Is involved in a myo-inositol catabolic pathway. Bicarbonate, and not CO2, is the end-product of the enzymatic reaction.</text>
</comment>
<comment type="catalytic activity">
    <reaction evidence="1">
        <text>3-oxopropanoate + NAD(+) + CoA + H2O = hydrogencarbonate + acetyl-CoA + NADH + H(+)</text>
        <dbReference type="Rhea" id="RHEA:76615"/>
        <dbReference type="ChEBI" id="CHEBI:15377"/>
        <dbReference type="ChEBI" id="CHEBI:15378"/>
        <dbReference type="ChEBI" id="CHEBI:17544"/>
        <dbReference type="ChEBI" id="CHEBI:33190"/>
        <dbReference type="ChEBI" id="CHEBI:57287"/>
        <dbReference type="ChEBI" id="CHEBI:57288"/>
        <dbReference type="ChEBI" id="CHEBI:57540"/>
        <dbReference type="ChEBI" id="CHEBI:57945"/>
        <dbReference type="EC" id="1.2.1.27"/>
    </reaction>
    <physiologicalReaction direction="left-to-right" evidence="1">
        <dbReference type="Rhea" id="RHEA:76616"/>
    </physiologicalReaction>
</comment>
<comment type="catalytic activity">
    <reaction evidence="1">
        <text>2-methyl-3-oxopropanoate + NAD(+) + CoA + H2O = propanoyl-CoA + hydrogencarbonate + NADH + H(+)</text>
        <dbReference type="Rhea" id="RHEA:20804"/>
        <dbReference type="ChEBI" id="CHEBI:15377"/>
        <dbReference type="ChEBI" id="CHEBI:15378"/>
        <dbReference type="ChEBI" id="CHEBI:17544"/>
        <dbReference type="ChEBI" id="CHEBI:57287"/>
        <dbReference type="ChEBI" id="CHEBI:57392"/>
        <dbReference type="ChEBI" id="CHEBI:57540"/>
        <dbReference type="ChEBI" id="CHEBI:57700"/>
        <dbReference type="ChEBI" id="CHEBI:57945"/>
        <dbReference type="EC" id="1.2.1.27"/>
    </reaction>
    <physiologicalReaction direction="left-to-right" evidence="1">
        <dbReference type="Rhea" id="RHEA:20805"/>
    </physiologicalReaction>
</comment>
<comment type="pathway">
    <text evidence="1">Polyol metabolism; myo-inositol degradation into acetyl-CoA; acetyl-CoA from myo-inositol: step 7/7.</text>
</comment>
<comment type="subunit">
    <text evidence="1">Homotetramer.</text>
</comment>
<comment type="similarity">
    <text evidence="1">Belongs to the aldehyde dehydrogenase family. IolA subfamily.</text>
</comment>